<gene>
    <name evidence="1" type="primary">glyA</name>
    <name type="ordered locus">YPDSF_2251</name>
</gene>
<proteinExistence type="inferred from homology"/>
<protein>
    <recommendedName>
        <fullName evidence="1">Serine hydroxymethyltransferase</fullName>
        <shortName evidence="1">SHMT</shortName>
        <shortName evidence="1">Serine methylase</shortName>
        <ecNumber evidence="1">2.1.2.1</ecNumber>
    </recommendedName>
</protein>
<keyword id="KW-0028">Amino-acid biosynthesis</keyword>
<keyword id="KW-0963">Cytoplasm</keyword>
<keyword id="KW-0554">One-carbon metabolism</keyword>
<keyword id="KW-0663">Pyridoxal phosphate</keyword>
<keyword id="KW-0808">Transferase</keyword>
<accession>A4TMW4</accession>
<organism>
    <name type="scientific">Yersinia pestis (strain Pestoides F)</name>
    <dbReference type="NCBI Taxonomy" id="386656"/>
    <lineage>
        <taxon>Bacteria</taxon>
        <taxon>Pseudomonadati</taxon>
        <taxon>Pseudomonadota</taxon>
        <taxon>Gammaproteobacteria</taxon>
        <taxon>Enterobacterales</taxon>
        <taxon>Yersiniaceae</taxon>
        <taxon>Yersinia</taxon>
    </lineage>
</organism>
<dbReference type="EC" id="2.1.2.1" evidence="1"/>
<dbReference type="EMBL" id="CP000668">
    <property type="protein sequence ID" value="ABP40626.1"/>
    <property type="molecule type" value="Genomic_DNA"/>
</dbReference>
<dbReference type="RefSeq" id="WP_002211552.1">
    <property type="nucleotide sequence ID" value="NZ_CP009715.1"/>
</dbReference>
<dbReference type="SMR" id="A4TMW4"/>
<dbReference type="GeneID" id="57975864"/>
<dbReference type="KEGG" id="ypp:YPDSF_2251"/>
<dbReference type="PATRIC" id="fig|386656.14.peg.3740"/>
<dbReference type="UniPathway" id="UPA00193"/>
<dbReference type="UniPathway" id="UPA00288">
    <property type="reaction ID" value="UER01023"/>
</dbReference>
<dbReference type="GO" id="GO:0005829">
    <property type="term" value="C:cytosol"/>
    <property type="evidence" value="ECO:0007669"/>
    <property type="project" value="TreeGrafter"/>
</dbReference>
<dbReference type="GO" id="GO:0004372">
    <property type="term" value="F:glycine hydroxymethyltransferase activity"/>
    <property type="evidence" value="ECO:0007669"/>
    <property type="project" value="UniProtKB-UniRule"/>
</dbReference>
<dbReference type="GO" id="GO:0030170">
    <property type="term" value="F:pyridoxal phosphate binding"/>
    <property type="evidence" value="ECO:0007669"/>
    <property type="project" value="UniProtKB-UniRule"/>
</dbReference>
<dbReference type="GO" id="GO:0019264">
    <property type="term" value="P:glycine biosynthetic process from serine"/>
    <property type="evidence" value="ECO:0007669"/>
    <property type="project" value="UniProtKB-UniRule"/>
</dbReference>
<dbReference type="GO" id="GO:0035999">
    <property type="term" value="P:tetrahydrofolate interconversion"/>
    <property type="evidence" value="ECO:0007669"/>
    <property type="project" value="UniProtKB-UniRule"/>
</dbReference>
<dbReference type="CDD" id="cd00378">
    <property type="entry name" value="SHMT"/>
    <property type="match status" value="1"/>
</dbReference>
<dbReference type="FunFam" id="3.40.640.10:FF:000001">
    <property type="entry name" value="Serine hydroxymethyltransferase"/>
    <property type="match status" value="1"/>
</dbReference>
<dbReference type="FunFam" id="3.90.1150.10:FF:000003">
    <property type="entry name" value="Serine hydroxymethyltransferase"/>
    <property type="match status" value="1"/>
</dbReference>
<dbReference type="Gene3D" id="3.90.1150.10">
    <property type="entry name" value="Aspartate Aminotransferase, domain 1"/>
    <property type="match status" value="1"/>
</dbReference>
<dbReference type="Gene3D" id="3.40.640.10">
    <property type="entry name" value="Type I PLP-dependent aspartate aminotransferase-like (Major domain)"/>
    <property type="match status" value="1"/>
</dbReference>
<dbReference type="HAMAP" id="MF_00051">
    <property type="entry name" value="SHMT"/>
    <property type="match status" value="1"/>
</dbReference>
<dbReference type="InterPro" id="IPR015424">
    <property type="entry name" value="PyrdxlP-dep_Trfase"/>
</dbReference>
<dbReference type="InterPro" id="IPR015421">
    <property type="entry name" value="PyrdxlP-dep_Trfase_major"/>
</dbReference>
<dbReference type="InterPro" id="IPR015422">
    <property type="entry name" value="PyrdxlP-dep_Trfase_small"/>
</dbReference>
<dbReference type="InterPro" id="IPR001085">
    <property type="entry name" value="Ser_HO-MeTrfase"/>
</dbReference>
<dbReference type="InterPro" id="IPR049943">
    <property type="entry name" value="Ser_HO-MeTrfase-like"/>
</dbReference>
<dbReference type="InterPro" id="IPR019798">
    <property type="entry name" value="Ser_HO-MeTrfase_PLP_BS"/>
</dbReference>
<dbReference type="InterPro" id="IPR039429">
    <property type="entry name" value="SHMT-like_dom"/>
</dbReference>
<dbReference type="NCBIfam" id="NF000586">
    <property type="entry name" value="PRK00011.1"/>
    <property type="match status" value="1"/>
</dbReference>
<dbReference type="PANTHER" id="PTHR11680">
    <property type="entry name" value="SERINE HYDROXYMETHYLTRANSFERASE"/>
    <property type="match status" value="1"/>
</dbReference>
<dbReference type="PANTHER" id="PTHR11680:SF50">
    <property type="entry name" value="SERINE HYDROXYMETHYLTRANSFERASE"/>
    <property type="match status" value="1"/>
</dbReference>
<dbReference type="Pfam" id="PF00464">
    <property type="entry name" value="SHMT"/>
    <property type="match status" value="1"/>
</dbReference>
<dbReference type="PIRSF" id="PIRSF000412">
    <property type="entry name" value="SHMT"/>
    <property type="match status" value="1"/>
</dbReference>
<dbReference type="SUPFAM" id="SSF53383">
    <property type="entry name" value="PLP-dependent transferases"/>
    <property type="match status" value="1"/>
</dbReference>
<dbReference type="PROSITE" id="PS00096">
    <property type="entry name" value="SHMT"/>
    <property type="match status" value="1"/>
</dbReference>
<evidence type="ECO:0000255" key="1">
    <source>
        <dbReference type="HAMAP-Rule" id="MF_00051"/>
    </source>
</evidence>
<reference key="1">
    <citation type="submission" date="2007-02" db="EMBL/GenBank/DDBJ databases">
        <title>Complete sequence of chromosome of Yersinia pestis Pestoides F.</title>
        <authorList>
            <consortium name="US DOE Joint Genome Institute"/>
            <person name="Copeland A."/>
            <person name="Lucas S."/>
            <person name="Lapidus A."/>
            <person name="Barry K."/>
            <person name="Detter J.C."/>
            <person name="Glavina del Rio T."/>
            <person name="Hammon N."/>
            <person name="Israni S."/>
            <person name="Dalin E."/>
            <person name="Tice H."/>
            <person name="Pitluck S."/>
            <person name="Di Bartolo G."/>
            <person name="Chain P."/>
            <person name="Malfatti S."/>
            <person name="Shin M."/>
            <person name="Vergez L."/>
            <person name="Schmutz J."/>
            <person name="Larimer F."/>
            <person name="Land M."/>
            <person name="Hauser L."/>
            <person name="Worsham P."/>
            <person name="Chu M."/>
            <person name="Bearden S."/>
            <person name="Garcia E."/>
            <person name="Richardson P."/>
        </authorList>
    </citation>
    <scope>NUCLEOTIDE SEQUENCE [LARGE SCALE GENOMIC DNA]</scope>
    <source>
        <strain>Pestoides F</strain>
    </source>
</reference>
<sequence length="417" mass="45422">MLKREMNIADYDADLWRAMEQEVVRQEEHIELIASENYTSPRVMQAQGSQLTNKYAEGYPGKRYYGGCEYVDVVEQLAIDRAKALFGADYANVQPHSGSQANVAVYSALLKPGDTVLGMNLAHGGHLTHGSPVNFSGKLYNIVPYGIDESGQIDYEDLARQAEIHKPKMIIGGFSAYSGIVDWAKMREIADSIDAWFFVDMAHVAGLVAAGVYPNPVPHAHIVTTTTHKTLAGPRGGLILAKGGDEDLYKKLNSSVFPGNQGGPLMHVIAGKAVALKEAMEPEFKIYQQQVAKNAKAMVAVFLERGYKVVSGGTDNHLFLLDLVDKDITGKDADAALGRANITVNKNSVPNDPKSPFVTSGVRIGSPAITRRGFKEAESRELAGWMCDVLDNINDEATIERVKQKVLAICARLPVYA</sequence>
<feature type="chain" id="PRO_1000006346" description="Serine hydroxymethyltransferase">
    <location>
        <begin position="1"/>
        <end position="417"/>
    </location>
</feature>
<feature type="binding site" evidence="1">
    <location>
        <position position="121"/>
    </location>
    <ligand>
        <name>(6S)-5,6,7,8-tetrahydrofolate</name>
        <dbReference type="ChEBI" id="CHEBI:57453"/>
    </ligand>
</feature>
<feature type="binding site" evidence="1">
    <location>
        <begin position="125"/>
        <end position="127"/>
    </location>
    <ligand>
        <name>(6S)-5,6,7,8-tetrahydrofolate</name>
        <dbReference type="ChEBI" id="CHEBI:57453"/>
    </ligand>
</feature>
<feature type="binding site" evidence="1">
    <location>
        <begin position="355"/>
        <end position="357"/>
    </location>
    <ligand>
        <name>(6S)-5,6,7,8-tetrahydrofolate</name>
        <dbReference type="ChEBI" id="CHEBI:57453"/>
    </ligand>
</feature>
<feature type="site" description="Plays an important role in substrate specificity" evidence="1">
    <location>
        <position position="228"/>
    </location>
</feature>
<feature type="modified residue" description="N6-(pyridoxal phosphate)lysine" evidence="1">
    <location>
        <position position="229"/>
    </location>
</feature>
<name>GLYA_YERPP</name>
<comment type="function">
    <text evidence="1">Catalyzes the reversible interconversion of serine and glycine with tetrahydrofolate (THF) serving as the one-carbon carrier. This reaction serves as the major source of one-carbon groups required for the biosynthesis of purines, thymidylate, methionine, and other important biomolecules. Also exhibits THF-independent aldolase activity toward beta-hydroxyamino acids, producing glycine and aldehydes, via a retro-aldol mechanism.</text>
</comment>
<comment type="catalytic activity">
    <reaction evidence="1">
        <text>(6R)-5,10-methylene-5,6,7,8-tetrahydrofolate + glycine + H2O = (6S)-5,6,7,8-tetrahydrofolate + L-serine</text>
        <dbReference type="Rhea" id="RHEA:15481"/>
        <dbReference type="ChEBI" id="CHEBI:15377"/>
        <dbReference type="ChEBI" id="CHEBI:15636"/>
        <dbReference type="ChEBI" id="CHEBI:33384"/>
        <dbReference type="ChEBI" id="CHEBI:57305"/>
        <dbReference type="ChEBI" id="CHEBI:57453"/>
        <dbReference type="EC" id="2.1.2.1"/>
    </reaction>
</comment>
<comment type="cofactor">
    <cofactor evidence="1">
        <name>pyridoxal 5'-phosphate</name>
        <dbReference type="ChEBI" id="CHEBI:597326"/>
    </cofactor>
</comment>
<comment type="pathway">
    <text evidence="1">One-carbon metabolism; tetrahydrofolate interconversion.</text>
</comment>
<comment type="pathway">
    <text evidence="1">Amino-acid biosynthesis; glycine biosynthesis; glycine from L-serine: step 1/1.</text>
</comment>
<comment type="subunit">
    <text evidence="1">Homodimer.</text>
</comment>
<comment type="subcellular location">
    <subcellularLocation>
        <location evidence="1">Cytoplasm</location>
    </subcellularLocation>
</comment>
<comment type="similarity">
    <text evidence="1">Belongs to the SHMT family.</text>
</comment>